<sequence length="209" mass="22373">MERTLWDITPALSPTTPTWPGDTPFSQEIAWKLEGDCPVNVGRITLSPHTGAHADAPLHYRADGAAIGQVPLDAYLGLCRVIHCVGVARVEPEHVRDALTNAPPRVLLRTYAHMPQTAWDNDFAAVAPETIALLATHGVKLIGVDTASLDPQTSKTMDAHHAVGKHGLAILEGLLLDDVPAGDYELIALPLKFATLDASPVRAVLRSLP</sequence>
<keyword id="KW-0378">Hydrolase</keyword>
<keyword id="KW-0479">Metal-binding</keyword>
<keyword id="KW-0823">Tryptophan catabolism</keyword>
<keyword id="KW-0862">Zinc</keyword>
<gene>
    <name evidence="1" type="primary">kynB</name>
    <name type="ordered locus">Rpic_0710</name>
</gene>
<protein>
    <recommendedName>
        <fullName evidence="1">Kynurenine formamidase</fullName>
        <shortName evidence="1">KFA</shortName>
        <shortName evidence="1">KFase</shortName>
        <ecNumber evidence="1">3.5.1.9</ecNumber>
    </recommendedName>
    <alternativeName>
        <fullName evidence="1">Arylformamidase</fullName>
    </alternativeName>
    <alternativeName>
        <fullName evidence="1">N-formylkynurenine formamidase</fullName>
        <shortName evidence="1">FKF</shortName>
    </alternativeName>
</protein>
<proteinExistence type="inferred from homology"/>
<feature type="chain" id="PRO_0000362136" description="Kynurenine formamidase">
    <location>
        <begin position="1"/>
        <end position="209"/>
    </location>
</feature>
<feature type="active site" description="Proton donor/acceptor" evidence="1">
    <location>
        <position position="59"/>
    </location>
</feature>
<feature type="binding site" evidence="1">
    <location>
        <position position="19"/>
    </location>
    <ligand>
        <name>substrate</name>
    </ligand>
</feature>
<feature type="binding site" evidence="1">
    <location>
        <position position="49"/>
    </location>
    <ligand>
        <name>Zn(2+)</name>
        <dbReference type="ChEBI" id="CHEBI:29105"/>
        <label>1</label>
    </ligand>
</feature>
<feature type="binding site" evidence="1">
    <location>
        <position position="53"/>
    </location>
    <ligand>
        <name>Zn(2+)</name>
        <dbReference type="ChEBI" id="CHEBI:29105"/>
        <label>1</label>
    </ligand>
</feature>
<feature type="binding site" evidence="1">
    <location>
        <position position="55"/>
    </location>
    <ligand>
        <name>Zn(2+)</name>
        <dbReference type="ChEBI" id="CHEBI:29105"/>
        <label>1</label>
    </ligand>
</feature>
<feature type="binding site" evidence="1">
    <location>
        <position position="55"/>
    </location>
    <ligand>
        <name>Zn(2+)</name>
        <dbReference type="ChEBI" id="CHEBI:29105"/>
        <label>2</label>
    </ligand>
</feature>
<feature type="binding site" evidence="1">
    <location>
        <position position="160"/>
    </location>
    <ligand>
        <name>Zn(2+)</name>
        <dbReference type="ChEBI" id="CHEBI:29105"/>
        <label>2</label>
    </ligand>
</feature>
<feature type="binding site" evidence="1">
    <location>
        <position position="172"/>
    </location>
    <ligand>
        <name>Zn(2+)</name>
        <dbReference type="ChEBI" id="CHEBI:29105"/>
        <label>1</label>
    </ligand>
</feature>
<feature type="binding site" evidence="1">
    <location>
        <position position="172"/>
    </location>
    <ligand>
        <name>Zn(2+)</name>
        <dbReference type="ChEBI" id="CHEBI:29105"/>
        <label>2</label>
    </ligand>
</feature>
<accession>B2U7J9</accession>
<evidence type="ECO:0000255" key="1">
    <source>
        <dbReference type="HAMAP-Rule" id="MF_01969"/>
    </source>
</evidence>
<name>KYNB_RALPJ</name>
<reference key="1">
    <citation type="submission" date="2008-05" db="EMBL/GenBank/DDBJ databases">
        <title>Complete sequence of chromosome 1 of Ralstonia pickettii 12J.</title>
        <authorList>
            <person name="Lucas S."/>
            <person name="Copeland A."/>
            <person name="Lapidus A."/>
            <person name="Glavina del Rio T."/>
            <person name="Dalin E."/>
            <person name="Tice H."/>
            <person name="Bruce D."/>
            <person name="Goodwin L."/>
            <person name="Pitluck S."/>
            <person name="Meincke L."/>
            <person name="Brettin T."/>
            <person name="Detter J.C."/>
            <person name="Han C."/>
            <person name="Kuske C.R."/>
            <person name="Schmutz J."/>
            <person name="Larimer F."/>
            <person name="Land M."/>
            <person name="Hauser L."/>
            <person name="Kyrpides N."/>
            <person name="Mikhailova N."/>
            <person name="Marsh T."/>
            <person name="Richardson P."/>
        </authorList>
    </citation>
    <scope>NUCLEOTIDE SEQUENCE [LARGE SCALE GENOMIC DNA]</scope>
    <source>
        <strain>12J</strain>
    </source>
</reference>
<dbReference type="EC" id="3.5.1.9" evidence="1"/>
<dbReference type="EMBL" id="CP001068">
    <property type="protein sequence ID" value="ACD25861.1"/>
    <property type="molecule type" value="Genomic_DNA"/>
</dbReference>
<dbReference type="SMR" id="B2U7J9"/>
<dbReference type="STRING" id="402626.Rpic_0710"/>
<dbReference type="KEGG" id="rpi:Rpic_0710"/>
<dbReference type="PATRIC" id="fig|402626.5.peg.1908"/>
<dbReference type="eggNOG" id="COG1878">
    <property type="taxonomic scope" value="Bacteria"/>
</dbReference>
<dbReference type="HOGENOM" id="CLU_030671_3_1_4"/>
<dbReference type="UniPathway" id="UPA00333">
    <property type="reaction ID" value="UER00454"/>
</dbReference>
<dbReference type="GO" id="GO:0004061">
    <property type="term" value="F:arylformamidase activity"/>
    <property type="evidence" value="ECO:0000250"/>
    <property type="project" value="UniProtKB"/>
</dbReference>
<dbReference type="GO" id="GO:0004328">
    <property type="term" value="F:formamidase activity"/>
    <property type="evidence" value="ECO:0007669"/>
    <property type="project" value="InterPro"/>
</dbReference>
<dbReference type="GO" id="GO:0008270">
    <property type="term" value="F:zinc ion binding"/>
    <property type="evidence" value="ECO:0007669"/>
    <property type="project" value="UniProtKB-UniRule"/>
</dbReference>
<dbReference type="GO" id="GO:0043420">
    <property type="term" value="P:anthranilate metabolic process"/>
    <property type="evidence" value="ECO:0000250"/>
    <property type="project" value="UniProtKB"/>
</dbReference>
<dbReference type="GO" id="GO:0019441">
    <property type="term" value="P:L-tryptophan catabolic process to kynurenine"/>
    <property type="evidence" value="ECO:0000250"/>
    <property type="project" value="UniProtKB"/>
</dbReference>
<dbReference type="FunFam" id="3.50.30.50:FF:000001">
    <property type="entry name" value="Kynurenine formamidase"/>
    <property type="match status" value="1"/>
</dbReference>
<dbReference type="Gene3D" id="3.50.30.50">
    <property type="entry name" value="Putative cyclase"/>
    <property type="match status" value="1"/>
</dbReference>
<dbReference type="HAMAP" id="MF_01969">
    <property type="entry name" value="KynB"/>
    <property type="match status" value="1"/>
</dbReference>
<dbReference type="InterPro" id="IPR007325">
    <property type="entry name" value="KFase/CYL"/>
</dbReference>
<dbReference type="InterPro" id="IPR037175">
    <property type="entry name" value="KFase_sf"/>
</dbReference>
<dbReference type="InterPro" id="IPR017484">
    <property type="entry name" value="Kynurenine_formamidase_bac"/>
</dbReference>
<dbReference type="NCBIfam" id="TIGR03035">
    <property type="entry name" value="trp_arylform"/>
    <property type="match status" value="1"/>
</dbReference>
<dbReference type="PANTHER" id="PTHR31118">
    <property type="entry name" value="CYCLASE-LIKE PROTEIN 2"/>
    <property type="match status" value="1"/>
</dbReference>
<dbReference type="PANTHER" id="PTHR31118:SF32">
    <property type="entry name" value="KYNURENINE FORMAMIDASE"/>
    <property type="match status" value="1"/>
</dbReference>
<dbReference type="Pfam" id="PF04199">
    <property type="entry name" value="Cyclase"/>
    <property type="match status" value="1"/>
</dbReference>
<dbReference type="SUPFAM" id="SSF102198">
    <property type="entry name" value="Putative cyclase"/>
    <property type="match status" value="1"/>
</dbReference>
<organism>
    <name type="scientific">Ralstonia pickettii (strain 12J)</name>
    <dbReference type="NCBI Taxonomy" id="402626"/>
    <lineage>
        <taxon>Bacteria</taxon>
        <taxon>Pseudomonadati</taxon>
        <taxon>Pseudomonadota</taxon>
        <taxon>Betaproteobacteria</taxon>
        <taxon>Burkholderiales</taxon>
        <taxon>Burkholderiaceae</taxon>
        <taxon>Ralstonia</taxon>
    </lineage>
</organism>
<comment type="function">
    <text evidence="1">Catalyzes the hydrolysis of N-formyl-L-kynurenine to L-kynurenine, the second step in the kynurenine pathway of tryptophan degradation.</text>
</comment>
<comment type="catalytic activity">
    <reaction evidence="1">
        <text>N-formyl-L-kynurenine + H2O = L-kynurenine + formate + H(+)</text>
        <dbReference type="Rhea" id="RHEA:13009"/>
        <dbReference type="ChEBI" id="CHEBI:15377"/>
        <dbReference type="ChEBI" id="CHEBI:15378"/>
        <dbReference type="ChEBI" id="CHEBI:15740"/>
        <dbReference type="ChEBI" id="CHEBI:57959"/>
        <dbReference type="ChEBI" id="CHEBI:58629"/>
        <dbReference type="EC" id="3.5.1.9"/>
    </reaction>
</comment>
<comment type="cofactor">
    <cofactor evidence="1">
        <name>Zn(2+)</name>
        <dbReference type="ChEBI" id="CHEBI:29105"/>
    </cofactor>
    <text evidence="1">Binds 2 zinc ions per subunit.</text>
</comment>
<comment type="pathway">
    <text evidence="1">Amino-acid degradation; L-tryptophan degradation via kynurenine pathway; L-kynurenine from L-tryptophan: step 2/2.</text>
</comment>
<comment type="subunit">
    <text evidence="1">Homodimer.</text>
</comment>
<comment type="similarity">
    <text evidence="1">Belongs to the Cyclase 1 superfamily. KynB family.</text>
</comment>